<organism>
    <name type="scientific">Yersinia pestis bv. Antiqua (strain Angola)</name>
    <dbReference type="NCBI Taxonomy" id="349746"/>
    <lineage>
        <taxon>Bacteria</taxon>
        <taxon>Pseudomonadati</taxon>
        <taxon>Pseudomonadota</taxon>
        <taxon>Gammaproteobacteria</taxon>
        <taxon>Enterobacterales</taxon>
        <taxon>Yersiniaceae</taxon>
        <taxon>Yersinia</taxon>
    </lineage>
</organism>
<feature type="chain" id="PRO_1000127063" description="UPF0181 protein YpAngola_A1635">
    <location>
        <begin position="1"/>
        <end position="85"/>
    </location>
</feature>
<feature type="region of interest" description="Disordered" evidence="2">
    <location>
        <begin position="50"/>
        <end position="85"/>
    </location>
</feature>
<feature type="compositionally biased region" description="Basic and acidic residues" evidence="2">
    <location>
        <begin position="55"/>
        <end position="72"/>
    </location>
</feature>
<feature type="compositionally biased region" description="Acidic residues" evidence="2">
    <location>
        <begin position="73"/>
        <end position="85"/>
    </location>
</feature>
<name>Y1635_YERPG</name>
<reference key="1">
    <citation type="journal article" date="2010" name="J. Bacteriol.">
        <title>Genome sequence of the deep-rooted Yersinia pestis strain Angola reveals new insights into the evolution and pangenome of the plague bacterium.</title>
        <authorList>
            <person name="Eppinger M."/>
            <person name="Worsham P.L."/>
            <person name="Nikolich M.P."/>
            <person name="Riley D.R."/>
            <person name="Sebastian Y."/>
            <person name="Mou S."/>
            <person name="Achtman M."/>
            <person name="Lindler L.E."/>
            <person name="Ravel J."/>
        </authorList>
    </citation>
    <scope>NUCLEOTIDE SEQUENCE [LARGE SCALE GENOMIC DNA]</scope>
    <source>
        <strain>Angola</strain>
    </source>
</reference>
<comment type="similarity">
    <text evidence="1">Belongs to the UPF0181 family.</text>
</comment>
<proteinExistence type="inferred from homology"/>
<gene>
    <name type="ordered locus">YpAngola_A1635</name>
</gene>
<accession>A9R5X0</accession>
<evidence type="ECO:0000255" key="1">
    <source>
        <dbReference type="HAMAP-Rule" id="MF_00507"/>
    </source>
</evidence>
<evidence type="ECO:0000256" key="2">
    <source>
        <dbReference type="SAM" id="MobiDB-lite"/>
    </source>
</evidence>
<protein>
    <recommendedName>
        <fullName evidence="1">UPF0181 protein YpAngola_A1635</fullName>
    </recommendedName>
</protein>
<sequence length="85" mass="9720">MLAGMPSLSHEEQQEAVERIHKFMSEGMSSGEAIALVAAEIRERHQNDPQAMAIFEDHDFDEHTESDYRRDDEPDADDIEDPYEG</sequence>
<dbReference type="EMBL" id="CP000901">
    <property type="protein sequence ID" value="ABX87408.1"/>
    <property type="molecule type" value="Genomic_DNA"/>
</dbReference>
<dbReference type="RefSeq" id="WP_002211082.1">
    <property type="nucleotide sequence ID" value="NZ_CP009935.1"/>
</dbReference>
<dbReference type="SMR" id="A9R5X0"/>
<dbReference type="KEGG" id="ypg:YpAngola_A1635"/>
<dbReference type="PATRIC" id="fig|349746.12.peg.2604"/>
<dbReference type="HAMAP" id="MF_00507">
    <property type="entry name" value="UPF0181"/>
    <property type="match status" value="1"/>
</dbReference>
<dbReference type="InterPro" id="IPR005371">
    <property type="entry name" value="UPF0181"/>
</dbReference>
<dbReference type="NCBIfam" id="NF003476">
    <property type="entry name" value="PRK05114.1"/>
    <property type="match status" value="1"/>
</dbReference>
<dbReference type="Pfam" id="PF03701">
    <property type="entry name" value="UPF0181"/>
    <property type="match status" value="1"/>
</dbReference>